<protein>
    <recommendedName>
        <fullName>Uncharacterized protein MJ1107</fullName>
    </recommendedName>
</protein>
<proteinExistence type="inferred from homology"/>
<feature type="chain" id="PRO_0000107171" description="Uncharacterized protein MJ1107">
    <location>
        <begin position="1"/>
        <end position="149"/>
    </location>
</feature>
<feature type="transmembrane region" description="Helical" evidence="1">
    <location>
        <begin position="124"/>
        <end position="144"/>
    </location>
</feature>
<gene>
    <name type="ordered locus">MJ1107</name>
</gene>
<name>Y1107_METJA</name>
<comment type="subcellular location">
    <subcellularLocation>
        <location evidence="2">Membrane</location>
        <topology evidence="2">Single-pass membrane protein</topology>
    </subcellularLocation>
</comment>
<comment type="similarity">
    <text evidence="2">Belongs to the M.jannaschii MJ0023/MJ0349/MJ1072/MJ1074/MJ1107/MJECL16 family.</text>
</comment>
<dbReference type="EMBL" id="L77117">
    <property type="protein sequence ID" value="AAB99111.1"/>
    <property type="molecule type" value="Genomic_DNA"/>
</dbReference>
<dbReference type="PIR" id="B64438">
    <property type="entry name" value="B64438"/>
</dbReference>
<dbReference type="SMR" id="Q58507"/>
<dbReference type="STRING" id="243232.MJ_1107"/>
<dbReference type="PaxDb" id="243232-MJ_1107"/>
<dbReference type="EnsemblBacteria" id="AAB99111">
    <property type="protein sequence ID" value="AAB99111"/>
    <property type="gene ID" value="MJ_1107"/>
</dbReference>
<dbReference type="KEGG" id="mja:MJ_1107"/>
<dbReference type="eggNOG" id="arCOG09652">
    <property type="taxonomic scope" value="Archaea"/>
</dbReference>
<dbReference type="HOGENOM" id="CLU_1821019_0_0_2"/>
<dbReference type="InParanoid" id="Q58507"/>
<dbReference type="OrthoDB" id="66480at2157"/>
<dbReference type="Proteomes" id="UP000000805">
    <property type="component" value="Chromosome"/>
</dbReference>
<dbReference type="GO" id="GO:0016020">
    <property type="term" value="C:membrane"/>
    <property type="evidence" value="ECO:0007669"/>
    <property type="project" value="UniProtKB-SubCell"/>
</dbReference>
<accession>Q58507</accession>
<reference key="1">
    <citation type="journal article" date="1996" name="Science">
        <title>Complete genome sequence of the methanogenic archaeon, Methanococcus jannaschii.</title>
        <authorList>
            <person name="Bult C.J."/>
            <person name="White O."/>
            <person name="Olsen G.J."/>
            <person name="Zhou L."/>
            <person name="Fleischmann R.D."/>
            <person name="Sutton G.G."/>
            <person name="Blake J.A."/>
            <person name="FitzGerald L.M."/>
            <person name="Clayton R.A."/>
            <person name="Gocayne J.D."/>
            <person name="Kerlavage A.R."/>
            <person name="Dougherty B.A."/>
            <person name="Tomb J.-F."/>
            <person name="Adams M.D."/>
            <person name="Reich C.I."/>
            <person name="Overbeek R."/>
            <person name="Kirkness E.F."/>
            <person name="Weinstock K.G."/>
            <person name="Merrick J.M."/>
            <person name="Glodek A."/>
            <person name="Scott J.L."/>
            <person name="Geoghagen N.S.M."/>
            <person name="Weidman J.F."/>
            <person name="Fuhrmann J.L."/>
            <person name="Nguyen D."/>
            <person name="Utterback T.R."/>
            <person name="Kelley J.M."/>
            <person name="Peterson J.D."/>
            <person name="Sadow P.W."/>
            <person name="Hanna M.C."/>
            <person name="Cotton M.D."/>
            <person name="Roberts K.M."/>
            <person name="Hurst M.A."/>
            <person name="Kaine B.P."/>
            <person name="Borodovsky M."/>
            <person name="Klenk H.-P."/>
            <person name="Fraser C.M."/>
            <person name="Smith H.O."/>
            <person name="Woese C.R."/>
            <person name="Venter J.C."/>
        </authorList>
    </citation>
    <scope>NUCLEOTIDE SEQUENCE [LARGE SCALE GENOMIC DNA]</scope>
    <source>
        <strain>ATCC 43067 / DSM 2661 / JAL-1 / JCM 10045 / NBRC 100440</strain>
    </source>
</reference>
<evidence type="ECO:0000255" key="1"/>
<evidence type="ECO:0000305" key="2"/>
<keyword id="KW-0472">Membrane</keyword>
<keyword id="KW-1185">Reference proteome</keyword>
<keyword id="KW-0812">Transmembrane</keyword>
<keyword id="KW-1133">Transmembrane helix</keyword>
<sequence>MKFFVVFVMAVAYSKLYELIKNVKDEKEAEELCKIIEEFFEKQCKENVSKKFEEQKPVLKLELKEELRKELTTKEDLELIGEKILRYVDNKINQVIEKINQLDKKIDEGFYQLDKKVDTLKRDIIIIALIIILANYAPSIIGKILSFLK</sequence>
<organism>
    <name type="scientific">Methanocaldococcus jannaschii (strain ATCC 43067 / DSM 2661 / JAL-1 / JCM 10045 / NBRC 100440)</name>
    <name type="common">Methanococcus jannaschii</name>
    <dbReference type="NCBI Taxonomy" id="243232"/>
    <lineage>
        <taxon>Archaea</taxon>
        <taxon>Methanobacteriati</taxon>
        <taxon>Methanobacteriota</taxon>
        <taxon>Methanomada group</taxon>
        <taxon>Methanococci</taxon>
        <taxon>Methanococcales</taxon>
        <taxon>Methanocaldococcaceae</taxon>
        <taxon>Methanocaldococcus</taxon>
    </lineage>
</organism>